<feature type="initiator methionine" description="Removed" evidence="1">
    <location>
        <position position="1"/>
    </location>
</feature>
<feature type="chain" id="PRO_0000172326" description="Large ribosomal subunit protein bL32">
    <location>
        <begin position="2"/>
        <end position="59"/>
    </location>
</feature>
<feature type="region of interest" description="Disordered" evidence="2">
    <location>
        <begin position="1"/>
        <end position="20"/>
    </location>
</feature>
<gene>
    <name type="primary">rpmF</name>
    <name type="ordered locus">TC_0195</name>
</gene>
<name>RL32_CHLMU</name>
<organism>
    <name type="scientific">Chlamydia muridarum (strain MoPn / Nigg)</name>
    <dbReference type="NCBI Taxonomy" id="243161"/>
    <lineage>
        <taxon>Bacteria</taxon>
        <taxon>Pseudomonadati</taxon>
        <taxon>Chlamydiota</taxon>
        <taxon>Chlamydiia</taxon>
        <taxon>Chlamydiales</taxon>
        <taxon>Chlamydiaceae</taxon>
        <taxon>Chlamydia/Chlamydophila group</taxon>
        <taxon>Chlamydia</taxon>
    </lineage>
</organism>
<keyword id="KW-0687">Ribonucleoprotein</keyword>
<keyword id="KW-0689">Ribosomal protein</keyword>
<sequence>MAVPRNRHSNARKNIRRSHHAKKACSGAVCNNCKQVFIPHTVCASCGFYKGKAVVTVEK</sequence>
<proteinExistence type="inferred from homology"/>
<comment type="similarity">
    <text evidence="3">Belongs to the bacterial ribosomal protein bL32 family.</text>
</comment>
<dbReference type="EMBL" id="AE002160">
    <property type="protein sequence ID" value="AAF39069.1"/>
    <property type="molecule type" value="Genomic_DNA"/>
</dbReference>
<dbReference type="PIR" id="H81730">
    <property type="entry name" value="H81730"/>
</dbReference>
<dbReference type="SMR" id="Q9PLB2"/>
<dbReference type="KEGG" id="cmu:TC_0195"/>
<dbReference type="eggNOG" id="COG0333">
    <property type="taxonomic scope" value="Bacteria"/>
</dbReference>
<dbReference type="HOGENOM" id="CLU_129084_1_3_0"/>
<dbReference type="OrthoDB" id="9812874at2"/>
<dbReference type="Proteomes" id="UP000000800">
    <property type="component" value="Chromosome"/>
</dbReference>
<dbReference type="GO" id="GO:0015934">
    <property type="term" value="C:large ribosomal subunit"/>
    <property type="evidence" value="ECO:0007669"/>
    <property type="project" value="InterPro"/>
</dbReference>
<dbReference type="GO" id="GO:0003735">
    <property type="term" value="F:structural constituent of ribosome"/>
    <property type="evidence" value="ECO:0007669"/>
    <property type="project" value="InterPro"/>
</dbReference>
<dbReference type="GO" id="GO:0006412">
    <property type="term" value="P:translation"/>
    <property type="evidence" value="ECO:0007669"/>
    <property type="project" value="UniProtKB-UniRule"/>
</dbReference>
<dbReference type="HAMAP" id="MF_00340">
    <property type="entry name" value="Ribosomal_bL32"/>
    <property type="match status" value="1"/>
</dbReference>
<dbReference type="InterPro" id="IPR002677">
    <property type="entry name" value="Ribosomal_bL32"/>
</dbReference>
<dbReference type="InterPro" id="IPR044957">
    <property type="entry name" value="Ribosomal_bL32_bact"/>
</dbReference>
<dbReference type="InterPro" id="IPR011332">
    <property type="entry name" value="Ribosomal_zn-bd"/>
</dbReference>
<dbReference type="NCBIfam" id="TIGR01031">
    <property type="entry name" value="rpmF_bact"/>
    <property type="match status" value="1"/>
</dbReference>
<dbReference type="PANTHER" id="PTHR35534">
    <property type="entry name" value="50S RIBOSOMAL PROTEIN L32"/>
    <property type="match status" value="1"/>
</dbReference>
<dbReference type="PANTHER" id="PTHR35534:SF1">
    <property type="entry name" value="LARGE RIBOSOMAL SUBUNIT PROTEIN BL32"/>
    <property type="match status" value="1"/>
</dbReference>
<dbReference type="Pfam" id="PF01783">
    <property type="entry name" value="Ribosomal_L32p"/>
    <property type="match status" value="1"/>
</dbReference>
<dbReference type="SUPFAM" id="SSF57829">
    <property type="entry name" value="Zn-binding ribosomal proteins"/>
    <property type="match status" value="1"/>
</dbReference>
<reference key="1">
    <citation type="journal article" date="2000" name="Nucleic Acids Res.">
        <title>Genome sequences of Chlamydia trachomatis MoPn and Chlamydia pneumoniae AR39.</title>
        <authorList>
            <person name="Read T.D."/>
            <person name="Brunham R.C."/>
            <person name="Shen C."/>
            <person name="Gill S.R."/>
            <person name="Heidelberg J.F."/>
            <person name="White O."/>
            <person name="Hickey E.K."/>
            <person name="Peterson J.D."/>
            <person name="Utterback T.R."/>
            <person name="Berry K.J."/>
            <person name="Bass S."/>
            <person name="Linher K.D."/>
            <person name="Weidman J.F."/>
            <person name="Khouri H.M."/>
            <person name="Craven B."/>
            <person name="Bowman C."/>
            <person name="Dodson R.J."/>
            <person name="Gwinn M.L."/>
            <person name="Nelson W.C."/>
            <person name="DeBoy R.T."/>
            <person name="Kolonay J.F."/>
            <person name="McClarty G."/>
            <person name="Salzberg S.L."/>
            <person name="Eisen J.A."/>
            <person name="Fraser C.M."/>
        </authorList>
    </citation>
    <scope>NUCLEOTIDE SEQUENCE [LARGE SCALE GENOMIC DNA]</scope>
    <source>
        <strain>MoPn / Nigg</strain>
    </source>
</reference>
<protein>
    <recommendedName>
        <fullName evidence="3">Large ribosomal subunit protein bL32</fullName>
    </recommendedName>
    <alternativeName>
        <fullName>50S ribosomal protein L32</fullName>
    </alternativeName>
</protein>
<evidence type="ECO:0000250" key="1"/>
<evidence type="ECO:0000256" key="2">
    <source>
        <dbReference type="SAM" id="MobiDB-lite"/>
    </source>
</evidence>
<evidence type="ECO:0000305" key="3"/>
<accession>Q9PLB2</accession>